<accession>Q27GV2</accession>
<name>YO2C_CAEEL</name>
<feature type="chain" id="PRO_0000248062" description="Uncharacterized protein ZK688.12">
    <location>
        <begin position="1"/>
        <end position="173"/>
    </location>
</feature>
<feature type="domain" description="MSP" evidence="1">
    <location>
        <begin position="16"/>
        <end position="133"/>
    </location>
</feature>
<feature type="region of interest" description="Disordered" evidence="2">
    <location>
        <begin position="141"/>
        <end position="173"/>
    </location>
</feature>
<feature type="compositionally biased region" description="Basic and acidic residues" evidence="2">
    <location>
        <begin position="141"/>
        <end position="163"/>
    </location>
</feature>
<keyword id="KW-1185">Reference proteome</keyword>
<proteinExistence type="predicted"/>
<protein>
    <recommendedName>
        <fullName>Uncharacterized protein ZK688.12</fullName>
    </recommendedName>
</protein>
<reference key="1">
    <citation type="journal article" date="1998" name="Science">
        <title>Genome sequence of the nematode C. elegans: a platform for investigating biology.</title>
        <authorList>
            <consortium name="The C. elegans sequencing consortium"/>
        </authorList>
    </citation>
    <scope>NUCLEOTIDE SEQUENCE [LARGE SCALE GENOMIC DNA]</scope>
    <source>
        <strain>Bristol N2</strain>
    </source>
</reference>
<sequence>MPTGKRKGDVESTKFDLVLRPETITFENFRIGWFYTEARLVIKNPTKNRYTYKIKVTNNDMFDIRTPKGFIDPETSIEIELLHVPGILLPRNDVHHFSVYYIKCDTEAQNSHSIWTSKKSEGCKHVLIRFPNKIIRTQEMKKMEEDDMKQQKERNKLSNEKMGIRNQNMGEKK</sequence>
<gene>
    <name type="ORF">ZK688.12</name>
</gene>
<evidence type="ECO:0000255" key="1">
    <source>
        <dbReference type="PROSITE-ProRule" id="PRU00132"/>
    </source>
</evidence>
<evidence type="ECO:0000256" key="2">
    <source>
        <dbReference type="SAM" id="MobiDB-lite"/>
    </source>
</evidence>
<dbReference type="EMBL" id="FO080277">
    <property type="protein sequence ID" value="CCD62543.1"/>
    <property type="molecule type" value="Genomic_DNA"/>
</dbReference>
<dbReference type="RefSeq" id="NP_001040897.2">
    <property type="nucleotide sequence ID" value="NM_001047432.3"/>
</dbReference>
<dbReference type="RefSeq" id="NP_001370359.1">
    <property type="nucleotide sequence ID" value="NM_001382925.2"/>
</dbReference>
<dbReference type="SMR" id="Q27GV2"/>
<dbReference type="BioGRID" id="606971">
    <property type="interactions" value="1"/>
</dbReference>
<dbReference type="PaxDb" id="6239-ZK688.12"/>
<dbReference type="EnsemblMetazoa" id="ZK688.12.1">
    <property type="protein sequence ID" value="ZK688.12.1"/>
    <property type="gene ID" value="WBGene00044763"/>
</dbReference>
<dbReference type="GeneID" id="4363060"/>
<dbReference type="UCSC" id="ZK688.12">
    <property type="organism name" value="c. elegans"/>
</dbReference>
<dbReference type="AGR" id="WB:WBGene00044763"/>
<dbReference type="WormBase" id="ZK688.12">
    <property type="protein sequence ID" value="CE42042"/>
    <property type="gene ID" value="WBGene00044763"/>
</dbReference>
<dbReference type="eggNOG" id="KOG0439">
    <property type="taxonomic scope" value="Eukaryota"/>
</dbReference>
<dbReference type="GeneTree" id="ENSGT00970000196013"/>
<dbReference type="HOGENOM" id="CLU_092913_0_0_1"/>
<dbReference type="InParanoid" id="Q27GV2"/>
<dbReference type="OrthoDB" id="5865691at2759"/>
<dbReference type="PhylomeDB" id="Q27GV2"/>
<dbReference type="PRO" id="PR:Q27GV2"/>
<dbReference type="Proteomes" id="UP000001940">
    <property type="component" value="Chromosome III"/>
</dbReference>
<dbReference type="Bgee" id="WBGene00044763">
    <property type="expression patterns" value="Expressed in adult organism and 2 other cell types or tissues"/>
</dbReference>
<dbReference type="Gene3D" id="2.60.40.10">
    <property type="entry name" value="Immunoglobulins"/>
    <property type="match status" value="1"/>
</dbReference>
<dbReference type="InterPro" id="IPR013783">
    <property type="entry name" value="Ig-like_fold"/>
</dbReference>
<dbReference type="InterPro" id="IPR000535">
    <property type="entry name" value="MSP_dom"/>
</dbReference>
<dbReference type="InterPro" id="IPR008962">
    <property type="entry name" value="PapD-like_sf"/>
</dbReference>
<dbReference type="PANTHER" id="PTHR21513">
    <property type="entry name" value="MAJOR SPERM PROTEIN"/>
    <property type="match status" value="1"/>
</dbReference>
<dbReference type="PANTHER" id="PTHR21513:SF26">
    <property type="entry name" value="MAJOR SPERM PROTEIN"/>
    <property type="match status" value="1"/>
</dbReference>
<dbReference type="Pfam" id="PF00635">
    <property type="entry name" value="Motile_Sperm"/>
    <property type="match status" value="1"/>
</dbReference>
<dbReference type="SUPFAM" id="SSF49354">
    <property type="entry name" value="PapD-like"/>
    <property type="match status" value="1"/>
</dbReference>
<dbReference type="PROSITE" id="PS50202">
    <property type="entry name" value="MSP"/>
    <property type="match status" value="1"/>
</dbReference>
<organism>
    <name type="scientific">Caenorhabditis elegans</name>
    <dbReference type="NCBI Taxonomy" id="6239"/>
    <lineage>
        <taxon>Eukaryota</taxon>
        <taxon>Metazoa</taxon>
        <taxon>Ecdysozoa</taxon>
        <taxon>Nematoda</taxon>
        <taxon>Chromadorea</taxon>
        <taxon>Rhabditida</taxon>
        <taxon>Rhabditina</taxon>
        <taxon>Rhabditomorpha</taxon>
        <taxon>Rhabditoidea</taxon>
        <taxon>Rhabditidae</taxon>
        <taxon>Peloderinae</taxon>
        <taxon>Caenorhabditis</taxon>
    </lineage>
</organism>